<evidence type="ECO:0000256" key="1">
    <source>
        <dbReference type="SAM" id="MobiDB-lite"/>
    </source>
</evidence>
<reference key="1">
    <citation type="journal article" date="1999" name="Virology">
        <title>Isolation and molecular characterization of a novel cytopathogenic paramyxovirus from tree shrews.</title>
        <authorList>
            <person name="Tidona C.A."/>
            <person name="Kurz H.W."/>
            <person name="Gelderblom H.R."/>
            <person name="Darai G."/>
        </authorList>
    </citation>
    <scope>NUCLEOTIDE SEQUENCE [GENOMIC RNA]</scope>
</reference>
<accession>Q9WS38</accession>
<feature type="chain" id="PRO_0000142806" description="Protein C">
    <location>
        <begin position="1"/>
        <end position="153"/>
    </location>
</feature>
<feature type="region of interest" description="Disordered" evidence="1">
    <location>
        <begin position="16"/>
        <end position="42"/>
    </location>
</feature>
<feature type="compositionally biased region" description="Polar residues" evidence="1">
    <location>
        <begin position="18"/>
        <end position="29"/>
    </location>
</feature>
<name>C_TPMV</name>
<organism>
    <name type="scientific">Tupaia paramyxovirus</name>
    <name type="common">TPMV</name>
    <dbReference type="NCBI Taxonomy" id="92129"/>
    <lineage>
        <taxon>Viruses</taxon>
        <taxon>Riboviria</taxon>
        <taxon>Orthornavirae</taxon>
        <taxon>Negarnaviricota</taxon>
        <taxon>Haploviricotina</taxon>
        <taxon>Monjiviricetes</taxon>
        <taxon>Mononegavirales</taxon>
        <taxon>Paramyxoviridae</taxon>
        <taxon>Orthoparamyxovirinae</taxon>
        <taxon>Narmovirus</taxon>
        <taxon>Narmovirus tupaiae</taxon>
    </lineage>
</organism>
<protein>
    <recommendedName>
        <fullName>Protein C</fullName>
    </recommendedName>
</protein>
<proteinExistence type="evidence at protein level"/>
<organismHost>
    <name type="scientific">Tupaia belangeri</name>
    <name type="common">Common tree shrew</name>
    <name type="synonym">Tupaia glis belangeri</name>
    <dbReference type="NCBI Taxonomy" id="37347"/>
</organismHost>
<gene>
    <name type="primary">P/V/C</name>
</gene>
<sequence length="153" mass="17796">MPLKFWKRLMPPKKKSSETLTLLSNQEPLSMQDPPLVRSSTRSSIYPPVIKKGEHRAKTKRNQELAEQLLKELPHETTSIANLVQRNNRDLDYNLEQLVRTLLQMEKEGTHVTESLINTLMETDTLTPKEQALIWPAYNLVRQMMHHAALHHI</sequence>
<dbReference type="EMBL" id="AF079780">
    <property type="protein sequence ID" value="AAD28697.1"/>
    <property type="molecule type" value="Genomic_RNA"/>
</dbReference>
<dbReference type="RefSeq" id="NP_054693.1">
    <property type="nucleotide sequence ID" value="NC_002199.1"/>
</dbReference>
<dbReference type="PDB" id="8BJW">
    <property type="method" value="X-ray"/>
    <property type="resolution" value="2.39 A"/>
    <property type="chains" value="A/B/C/D/E/F=54-153"/>
</dbReference>
<dbReference type="PDBsum" id="8BJW"/>
<dbReference type="SMR" id="Q9WS38"/>
<dbReference type="OrthoDB" id="10126at10239"/>
<dbReference type="Proteomes" id="UP000136220">
    <property type="component" value="Genome"/>
</dbReference>
<dbReference type="InterPro" id="IPR031812">
    <property type="entry name" value="C_Hendra"/>
</dbReference>
<dbReference type="Pfam" id="PF16821">
    <property type="entry name" value="C_Hendra"/>
    <property type="match status" value="1"/>
</dbReference>
<keyword id="KW-0002">3D-structure</keyword>
<keyword id="KW-1185">Reference proteome</keyword>